<evidence type="ECO:0000255" key="1">
    <source>
        <dbReference type="HAMAP-Rule" id="MF_00102"/>
    </source>
</evidence>
<evidence type="ECO:0000305" key="2"/>
<gene>
    <name evidence="1" type="primary">dapB</name>
    <name type="ordered locus">BL1194</name>
</gene>
<proteinExistence type="inferred from homology"/>
<reference key="1">
    <citation type="journal article" date="2002" name="Proc. Natl. Acad. Sci. U.S.A.">
        <title>The genome sequence of Bifidobacterium longum reflects its adaptation to the human gastrointestinal tract.</title>
        <authorList>
            <person name="Schell M.A."/>
            <person name="Karmirantzou M."/>
            <person name="Snel B."/>
            <person name="Vilanova D."/>
            <person name="Berger B."/>
            <person name="Pessi G."/>
            <person name="Zwahlen M.-C."/>
            <person name="Desiere F."/>
            <person name="Bork P."/>
            <person name="Delley M."/>
            <person name="Pridmore R.D."/>
            <person name="Arigoni F."/>
        </authorList>
    </citation>
    <scope>NUCLEOTIDE SEQUENCE [LARGE SCALE GENOMIC DNA]</scope>
    <source>
        <strain>NCC 2705</strain>
    </source>
</reference>
<keyword id="KW-0028">Amino-acid biosynthesis</keyword>
<keyword id="KW-0963">Cytoplasm</keyword>
<keyword id="KW-0220">Diaminopimelate biosynthesis</keyword>
<keyword id="KW-0457">Lysine biosynthesis</keyword>
<keyword id="KW-0520">NAD</keyword>
<keyword id="KW-0521">NADP</keyword>
<keyword id="KW-0560">Oxidoreductase</keyword>
<keyword id="KW-1185">Reference proteome</keyword>
<organism>
    <name type="scientific">Bifidobacterium longum (strain NCC 2705)</name>
    <dbReference type="NCBI Taxonomy" id="206672"/>
    <lineage>
        <taxon>Bacteria</taxon>
        <taxon>Bacillati</taxon>
        <taxon>Actinomycetota</taxon>
        <taxon>Actinomycetes</taxon>
        <taxon>Bifidobacteriales</taxon>
        <taxon>Bifidobacteriaceae</taxon>
        <taxon>Bifidobacterium</taxon>
    </lineage>
</organism>
<dbReference type="EC" id="1.17.1.8" evidence="1"/>
<dbReference type="EMBL" id="AE014295">
    <property type="protein sequence ID" value="AAN24999.1"/>
    <property type="molecule type" value="Genomic_DNA"/>
</dbReference>
<dbReference type="RefSeq" id="NP_696363.1">
    <property type="nucleotide sequence ID" value="NC_004307.2"/>
</dbReference>
<dbReference type="RefSeq" id="WP_011068345.1">
    <property type="nucleotide sequence ID" value="NC_004307.2"/>
</dbReference>
<dbReference type="SMR" id="Q8G526"/>
<dbReference type="STRING" id="206672.BL1194"/>
<dbReference type="EnsemblBacteria" id="AAN24999">
    <property type="protein sequence ID" value="AAN24999"/>
    <property type="gene ID" value="BL1194"/>
</dbReference>
<dbReference type="KEGG" id="blo:BL1194"/>
<dbReference type="PATRIC" id="fig|206672.9.peg.907"/>
<dbReference type="HOGENOM" id="CLU_047479_0_1_11"/>
<dbReference type="OrthoDB" id="9790352at2"/>
<dbReference type="PhylomeDB" id="Q8G526"/>
<dbReference type="UniPathway" id="UPA00034">
    <property type="reaction ID" value="UER00018"/>
</dbReference>
<dbReference type="Proteomes" id="UP000000439">
    <property type="component" value="Chromosome"/>
</dbReference>
<dbReference type="GO" id="GO:0005829">
    <property type="term" value="C:cytosol"/>
    <property type="evidence" value="ECO:0007669"/>
    <property type="project" value="TreeGrafter"/>
</dbReference>
<dbReference type="GO" id="GO:0008839">
    <property type="term" value="F:4-hydroxy-tetrahydrodipicolinate reductase"/>
    <property type="evidence" value="ECO:0007669"/>
    <property type="project" value="UniProtKB-EC"/>
</dbReference>
<dbReference type="GO" id="GO:0051287">
    <property type="term" value="F:NAD binding"/>
    <property type="evidence" value="ECO:0007669"/>
    <property type="project" value="UniProtKB-UniRule"/>
</dbReference>
<dbReference type="GO" id="GO:0050661">
    <property type="term" value="F:NADP binding"/>
    <property type="evidence" value="ECO:0007669"/>
    <property type="project" value="UniProtKB-UniRule"/>
</dbReference>
<dbReference type="GO" id="GO:0016726">
    <property type="term" value="F:oxidoreductase activity, acting on CH or CH2 groups, NAD or NADP as acceptor"/>
    <property type="evidence" value="ECO:0007669"/>
    <property type="project" value="UniProtKB-UniRule"/>
</dbReference>
<dbReference type="GO" id="GO:0019877">
    <property type="term" value="P:diaminopimelate biosynthetic process"/>
    <property type="evidence" value="ECO:0007669"/>
    <property type="project" value="UniProtKB-UniRule"/>
</dbReference>
<dbReference type="GO" id="GO:0009089">
    <property type="term" value="P:lysine biosynthetic process via diaminopimelate"/>
    <property type="evidence" value="ECO:0007669"/>
    <property type="project" value="UniProtKB-UniRule"/>
</dbReference>
<dbReference type="CDD" id="cd02274">
    <property type="entry name" value="DHDPR_N"/>
    <property type="match status" value="1"/>
</dbReference>
<dbReference type="FunFam" id="3.30.360.10:FF:000009">
    <property type="entry name" value="4-hydroxy-tetrahydrodipicolinate reductase"/>
    <property type="match status" value="1"/>
</dbReference>
<dbReference type="Gene3D" id="3.30.360.10">
    <property type="entry name" value="Dihydrodipicolinate Reductase, domain 2"/>
    <property type="match status" value="1"/>
</dbReference>
<dbReference type="Gene3D" id="3.40.50.720">
    <property type="entry name" value="NAD(P)-binding Rossmann-like Domain"/>
    <property type="match status" value="1"/>
</dbReference>
<dbReference type="HAMAP" id="MF_00102">
    <property type="entry name" value="DapB"/>
    <property type="match status" value="1"/>
</dbReference>
<dbReference type="InterPro" id="IPR022663">
    <property type="entry name" value="DapB_C"/>
</dbReference>
<dbReference type="InterPro" id="IPR000846">
    <property type="entry name" value="DapB_N"/>
</dbReference>
<dbReference type="InterPro" id="IPR022664">
    <property type="entry name" value="DapB_N_CS"/>
</dbReference>
<dbReference type="InterPro" id="IPR023940">
    <property type="entry name" value="DHDPR_bac"/>
</dbReference>
<dbReference type="InterPro" id="IPR036291">
    <property type="entry name" value="NAD(P)-bd_dom_sf"/>
</dbReference>
<dbReference type="NCBIfam" id="TIGR00036">
    <property type="entry name" value="dapB"/>
    <property type="match status" value="1"/>
</dbReference>
<dbReference type="PANTHER" id="PTHR20836:SF0">
    <property type="entry name" value="4-HYDROXY-TETRAHYDRODIPICOLINATE REDUCTASE 1, CHLOROPLASTIC-RELATED"/>
    <property type="match status" value="1"/>
</dbReference>
<dbReference type="PANTHER" id="PTHR20836">
    <property type="entry name" value="DIHYDRODIPICOLINATE REDUCTASE"/>
    <property type="match status" value="1"/>
</dbReference>
<dbReference type="Pfam" id="PF05173">
    <property type="entry name" value="DapB_C"/>
    <property type="match status" value="1"/>
</dbReference>
<dbReference type="Pfam" id="PF01113">
    <property type="entry name" value="DapB_N"/>
    <property type="match status" value="1"/>
</dbReference>
<dbReference type="PIRSF" id="PIRSF000161">
    <property type="entry name" value="DHPR"/>
    <property type="match status" value="1"/>
</dbReference>
<dbReference type="SUPFAM" id="SSF55347">
    <property type="entry name" value="Glyceraldehyde-3-phosphate dehydrogenase-like, C-terminal domain"/>
    <property type="match status" value="1"/>
</dbReference>
<dbReference type="SUPFAM" id="SSF51735">
    <property type="entry name" value="NAD(P)-binding Rossmann-fold domains"/>
    <property type="match status" value="1"/>
</dbReference>
<dbReference type="PROSITE" id="PS01298">
    <property type="entry name" value="DAPB"/>
    <property type="match status" value="1"/>
</dbReference>
<comment type="function">
    <text evidence="1">Catalyzes the conversion of 4-hydroxy-tetrahydrodipicolinate (HTPA) to tetrahydrodipicolinate.</text>
</comment>
<comment type="catalytic activity">
    <reaction evidence="1">
        <text>(S)-2,3,4,5-tetrahydrodipicolinate + NAD(+) + H2O = (2S,4S)-4-hydroxy-2,3,4,5-tetrahydrodipicolinate + NADH + H(+)</text>
        <dbReference type="Rhea" id="RHEA:35323"/>
        <dbReference type="ChEBI" id="CHEBI:15377"/>
        <dbReference type="ChEBI" id="CHEBI:15378"/>
        <dbReference type="ChEBI" id="CHEBI:16845"/>
        <dbReference type="ChEBI" id="CHEBI:57540"/>
        <dbReference type="ChEBI" id="CHEBI:57945"/>
        <dbReference type="ChEBI" id="CHEBI:67139"/>
        <dbReference type="EC" id="1.17.1.8"/>
    </reaction>
</comment>
<comment type="catalytic activity">
    <reaction evidence="1">
        <text>(S)-2,3,4,5-tetrahydrodipicolinate + NADP(+) + H2O = (2S,4S)-4-hydroxy-2,3,4,5-tetrahydrodipicolinate + NADPH + H(+)</text>
        <dbReference type="Rhea" id="RHEA:35331"/>
        <dbReference type="ChEBI" id="CHEBI:15377"/>
        <dbReference type="ChEBI" id="CHEBI:15378"/>
        <dbReference type="ChEBI" id="CHEBI:16845"/>
        <dbReference type="ChEBI" id="CHEBI:57783"/>
        <dbReference type="ChEBI" id="CHEBI:58349"/>
        <dbReference type="ChEBI" id="CHEBI:67139"/>
        <dbReference type="EC" id="1.17.1.8"/>
    </reaction>
</comment>
<comment type="pathway">
    <text evidence="1">Amino-acid biosynthesis; L-lysine biosynthesis via DAP pathway; (S)-tetrahydrodipicolinate from L-aspartate: step 4/4.</text>
</comment>
<comment type="subcellular location">
    <subcellularLocation>
        <location evidence="1">Cytoplasm</location>
    </subcellularLocation>
</comment>
<comment type="similarity">
    <text evidence="1">Belongs to the DapB family.</text>
</comment>
<comment type="caution">
    <text evidence="2">Was originally thought to be a dihydrodipicolinate reductase (DHDPR), catalyzing the conversion of dihydrodipicolinate to tetrahydrodipicolinate. However, it was shown in E.coli that the substrate of the enzymatic reaction is not dihydrodipicolinate (DHDP) but in fact (2S,4S)-4-hydroxy-2,3,4,5-tetrahydrodipicolinic acid (HTPA), the product released by the DapA-catalyzed reaction.</text>
</comment>
<name>DAPB_BIFLO</name>
<protein>
    <recommendedName>
        <fullName evidence="1">4-hydroxy-tetrahydrodipicolinate reductase</fullName>
        <shortName evidence="1">HTPA reductase</shortName>
        <ecNumber evidence="1">1.17.1.8</ecNumber>
    </recommendedName>
</protein>
<sequence length="251" mass="26245">MIKVSVVGAKGRMGLHVVEAVNNAEDTQLALALDAGDDLTQITTDNTDVVVEFTVPSVSLNNVLTLIGQGVDVVVGTTGWTDEKLAQVKSAIANGPKPETQKVFIAPNFAISAVLADYFATKAAKYFESAEVIELHHPTKVDAPSGTAIHTAHGIAEARKAAGLAPVPDATETDGGSRGQVVDGIHVHAVRLRGLNAHEEVLFGNAGEQLTIRADSFDRTSFMPGVLLAVRKLAGDAPAGLTIGLDHFLDL</sequence>
<feature type="chain" id="PRO_0000141412" description="4-hydroxy-tetrahydrodipicolinate reductase">
    <location>
        <begin position="1"/>
        <end position="251"/>
    </location>
</feature>
<feature type="active site" description="Proton donor/acceptor" evidence="1">
    <location>
        <position position="136"/>
    </location>
</feature>
<feature type="active site" description="Proton donor" evidence="1">
    <location>
        <position position="140"/>
    </location>
</feature>
<feature type="binding site" evidence="1">
    <location>
        <begin position="8"/>
        <end position="13"/>
    </location>
    <ligand>
        <name>NAD(+)</name>
        <dbReference type="ChEBI" id="CHEBI:57540"/>
    </ligand>
</feature>
<feature type="binding site" evidence="1">
    <location>
        <begin position="76"/>
        <end position="78"/>
    </location>
    <ligand>
        <name>NAD(+)</name>
        <dbReference type="ChEBI" id="CHEBI:57540"/>
    </ligand>
</feature>
<feature type="binding site" evidence="1">
    <location>
        <begin position="106"/>
        <end position="109"/>
    </location>
    <ligand>
        <name>NAD(+)</name>
        <dbReference type="ChEBI" id="CHEBI:57540"/>
    </ligand>
</feature>
<feature type="binding site" evidence="1">
    <location>
        <position position="137"/>
    </location>
    <ligand>
        <name>(S)-2,3,4,5-tetrahydrodipicolinate</name>
        <dbReference type="ChEBI" id="CHEBI:16845"/>
    </ligand>
</feature>
<feature type="binding site" evidence="1">
    <location>
        <begin position="146"/>
        <end position="147"/>
    </location>
    <ligand>
        <name>(S)-2,3,4,5-tetrahydrodipicolinate</name>
        <dbReference type="ChEBI" id="CHEBI:16845"/>
    </ligand>
</feature>
<accession>Q8G526</accession>